<organism>
    <name type="scientific">Mus musculus</name>
    <name type="common">Mouse</name>
    <dbReference type="NCBI Taxonomy" id="10090"/>
    <lineage>
        <taxon>Eukaryota</taxon>
        <taxon>Metazoa</taxon>
        <taxon>Chordata</taxon>
        <taxon>Craniata</taxon>
        <taxon>Vertebrata</taxon>
        <taxon>Euteleostomi</taxon>
        <taxon>Mammalia</taxon>
        <taxon>Eutheria</taxon>
        <taxon>Euarchontoglires</taxon>
        <taxon>Glires</taxon>
        <taxon>Rodentia</taxon>
        <taxon>Myomorpha</taxon>
        <taxon>Muroidea</taxon>
        <taxon>Muridae</taxon>
        <taxon>Murinae</taxon>
        <taxon>Mus</taxon>
        <taxon>Mus</taxon>
    </lineage>
</organism>
<evidence type="ECO:0000250" key="1"/>
<evidence type="ECO:0000255" key="2"/>
<evidence type="ECO:0000255" key="3">
    <source>
        <dbReference type="PROSITE-ProRule" id="PRU00352"/>
    </source>
</evidence>
<evidence type="ECO:0000269" key="4">
    <source>
    </source>
</evidence>
<evidence type="ECO:0000269" key="5">
    <source>
    </source>
</evidence>
<evidence type="ECO:0000305" key="6"/>
<evidence type="ECO:0007744" key="7">
    <source>
    </source>
</evidence>
<protein>
    <recommendedName>
        <fullName>Plexin-C1</fullName>
    </recommendedName>
    <alternativeName>
        <fullName>Virus-encoded semaphorin protein receptor</fullName>
    </alternativeName>
    <cdAntigenName>CD232</cdAntigenName>
</protein>
<name>PLXC1_MOUSE</name>
<gene>
    <name type="primary">Plxnc1</name>
    <name type="synonym">Vespr</name>
</gene>
<reference key="1">
    <citation type="submission" date="1999-09" db="EMBL/GenBank/DDBJ databases">
        <title>Mouse homolog of human viral-encoded semaphorin protein receptor (VESPR).</title>
        <authorList>
            <person name="Bradshaw J.D."/>
            <person name="Comeau M.C."/>
            <person name="Spriggs M.K."/>
        </authorList>
    </citation>
    <scope>NUCLEOTIDE SEQUENCE [MRNA]</scope>
</reference>
<reference key="2">
    <citation type="journal article" date="1998" name="Genomics">
        <title>A 500-kb YAC and BAC contig encompassing the high-growth deletion in mouse chromosome 10 and identification of the murine Raidd/Cradd gene in the candidate region.</title>
        <authorList>
            <person name="Horvat S."/>
            <person name="Medrano J.F."/>
        </authorList>
    </citation>
    <scope>NUCLEOTIDE SEQUENCE [GENOMIC DNA] OF 1-1205</scope>
    <source>
        <strain>129/Sv</strain>
    </source>
</reference>
<reference key="3">
    <citation type="journal article" date="2005" name="Int. Immunol.">
        <title>Dendritic cell function in mice lacking Plexin C1.</title>
        <authorList>
            <person name="Walzer T."/>
            <person name="Galibert L."/>
            <person name="De Smedt T."/>
        </authorList>
    </citation>
    <scope>DISRUPTION PHENOTYPE</scope>
</reference>
<reference key="4">
    <citation type="journal article" date="2005" name="J. Immunol.">
        <title>Plexin C1 engagement on mouse dendritic cells by viral semaphorin A39R induces actin cytoskeleton rearrangement and inhibits integrin-mediated adhesion and chemokine-induced migration.</title>
        <authorList>
            <person name="Walzer T."/>
            <person name="Galibert L."/>
            <person name="Comeau M.R."/>
            <person name="De Smedt T."/>
        </authorList>
    </citation>
    <scope>FUNCTION</scope>
    <scope>TISSUE SPECIFICITY</scope>
</reference>
<reference key="5">
    <citation type="journal article" date="2010" name="Cell">
        <title>A tissue-specific atlas of mouse protein phosphorylation and expression.</title>
        <authorList>
            <person name="Huttlin E.L."/>
            <person name="Jedrychowski M.P."/>
            <person name="Elias J.E."/>
            <person name="Goswami T."/>
            <person name="Rad R."/>
            <person name="Beausoleil S.A."/>
            <person name="Villen J."/>
            <person name="Haas W."/>
            <person name="Sowa M.E."/>
            <person name="Gygi S.P."/>
        </authorList>
    </citation>
    <scope>PHOSPHORYLATION [LARGE SCALE ANALYSIS] AT SER-984</scope>
    <scope>IDENTIFICATION BY MASS SPECTROMETRY [LARGE SCALE ANALYSIS]</scope>
    <source>
        <tissue>Brain</tissue>
        <tissue>Liver</tissue>
        <tissue>Lung</tissue>
        <tissue>Spleen</tissue>
        <tissue>Testis</tissue>
    </source>
</reference>
<sequence length="1574" mass="176474">MEVSRRKTPPRPPYPAAPLPLIAYLLALAAPARGADEPVWRSEQAIGAIAASRADGVFVASGSCLDQLDYSLKNRLSRLYRDQAGNCTEPVSLAPPARPRPGSSFSKLLLPYREGATGLEGLLLTGWTFDRGACEVRPLGNLNRSSLRNGTEVVSCHPQGSTAGVVYRASGTDLWYLAVAATYVLPEPETANRCNPAASDRDTAIALKNTEGRSLATQELGRLKLRGSAGSLHFVDAFLWNGSVYFPYYPYNYTSGAATGWPSMARIAQSTEVLFQGQAALDCDHGHPEGRRLLLSSSLVEAVDIWAGVFSAATGEGQERRSPATTALCLFRMSEIQAHARSCSWDFQATEHNCKEGDRPERVQPIASSTLIHSDLTSVYGTVVMNRTVLFLGTGDGQLLKVVLGENLTSNCPEVIYEIKEETPVFYKLVPHPMKNIYIYLTAGKEVRRIPVANCSKRKSCSECLAAADPHCGWCLPLQRCTFQGDCTHAGSFENWLDISSGPKKCPKIQILRSLRERTTVTIVGSISARHSECVVKNADTGKLLCQGRSQLNWTCACNIPSRPSYNVLVVNATFSFPSWNLSERFNFTNCASLKECPACIRSGCAWCKRDKKCIHPFTPCEPSDYERNQELCQVAVEKSPKDSGGGRVKESKRNRTDGAVQVFYIKAIEPQKISTLGKSNVIVTGANFTQASNITMILRGTSTCERDVIRVSHVLNDTHMKFSLPSSRKEMKDVCIQFDGGTCSSAGALSYIALPHCSLIVPATTWISGGQNITIMGRNFDVIDNLIISHELKGNANVNINVSEYCAATFCRFLAPNLKSSKVRTNVAVKLRVQDTYLDCGTLQYLEDPRFTGYRVESEIDTELEVKIQKENDNFNISKDDIDITLFHGENKQFNCSFENITRNQDLTTILCKIKSIKNANTIASSSKKVRVKLGNLELYVEQESVPSTWYFLIALPILLAIVIVVAVVVTRYKSKELSRKQSQQLELLESELRKEIRDGFAELQMDKLDVVDSFGTVPFLDYKHFALRTFFPESGGFTHIFTEDMHNRDANDKNESLTALDALICNKSFLVTVIHTLEKQKNFSVKDRCLFASFLTIALQTKLVYLTSILEVLTRDLMEQCSNMQPKLMLRRTESVVEKLLTNWMSVCLSGFLRETVGEPFYLLVTTLNQKINKGPVDVITCKALYTLNEDWLLWQVPEFNTVALNVVFEKIPENESADVCRNISVNVLDCDTIGQAKEKVFQAFLSKNGSPYGLQLNEIGLELQVGTRQKELLDIDSSSVILEDGITKLNTIGHYEISNGSTIKVFKKIANFTSDVEYSDDHCHLILPDSEAFQVVQGKRHRGKHKFKVKEMYLTKLLSTKVAIHSVLEKLFRSIWSLPNSRAPFAIKYFFDFLDAQAENKKITDPDVVHIWKTNSLPLRFWVNILKNPQFVFDIKKTPHIDSCLSVIAQAFMDAFSLTEQQLGKEAPTNKLLYAKDIPTYKEEVKSYYKAIRDLPPLSSLEMEEFLTQESKKHENEFNEEVALTEIYKYIVKYFDEILNKLERERGLEEAQKQLLHVKVLFDEKKKCKWM</sequence>
<keyword id="KW-1015">Disulfide bond</keyword>
<keyword id="KW-0325">Glycoprotein</keyword>
<keyword id="KW-0472">Membrane</keyword>
<keyword id="KW-0597">Phosphoprotein</keyword>
<keyword id="KW-0675">Receptor</keyword>
<keyword id="KW-1185">Reference proteome</keyword>
<keyword id="KW-0732">Signal</keyword>
<keyword id="KW-0812">Transmembrane</keyword>
<keyword id="KW-1133">Transmembrane helix</keyword>
<comment type="function">
    <text evidence="1 4">Receptor for SEMA7A, for vaccinia virus semaphorin A39R and for herpesvirus Sema protein. Binding of semaphorins triggers cellular responses leading to the rearrangement of the cytoskeleton and to secretion of IL6 and IL8 (By similarity).</text>
</comment>
<comment type="subunit">
    <text evidence="1">Monomer. Homodimer. Interacts with SEMA7A (By similarity).</text>
</comment>
<comment type="subcellular location">
    <subcellularLocation>
        <location evidence="6">Membrane</location>
        <topology evidence="6">Single-pass type I membrane protein</topology>
    </subcellularLocation>
</comment>
<comment type="tissue specificity">
    <text evidence="4">Detected on dendritic cells, skin Langerhans cells and neutrophils (at protein level).</text>
</comment>
<comment type="disruption phenotype">
    <text evidence="5">No visible phenotype.</text>
</comment>
<comment type="similarity">
    <text evidence="6">Belongs to the plexin family.</text>
</comment>
<dbReference type="EMBL" id="AF190578">
    <property type="protein sequence ID" value="AAF01334.1"/>
    <property type="molecule type" value="mRNA"/>
</dbReference>
<dbReference type="EMBL" id="AE016773">
    <property type="protein sequence ID" value="AAN84620.1"/>
    <property type="molecule type" value="Genomic_DNA"/>
</dbReference>
<dbReference type="CCDS" id="CCDS48676.1"/>
<dbReference type="RefSeq" id="NP_061267.1">
    <property type="nucleotide sequence ID" value="NM_018797.3"/>
</dbReference>
<dbReference type="SMR" id="Q9QZC2"/>
<dbReference type="BioGRID" id="207723">
    <property type="interactions" value="3"/>
</dbReference>
<dbReference type="FunCoup" id="Q9QZC2">
    <property type="interactions" value="12"/>
</dbReference>
<dbReference type="STRING" id="10090.ENSMUSP00000096939"/>
<dbReference type="GlyConnect" id="2596">
    <property type="glycosylation" value="12 N-Linked glycans (9 sites)"/>
</dbReference>
<dbReference type="GlyCosmos" id="Q9QZC2">
    <property type="glycosylation" value="14 sites, 12 glycans"/>
</dbReference>
<dbReference type="GlyGen" id="Q9QZC2">
    <property type="glycosylation" value="19 sites, 22 N-linked glycans (16 sites), 1 O-linked glycan (1 site)"/>
</dbReference>
<dbReference type="iPTMnet" id="Q9QZC2"/>
<dbReference type="PhosphoSitePlus" id="Q9QZC2"/>
<dbReference type="jPOST" id="Q9QZC2"/>
<dbReference type="PaxDb" id="10090-ENSMUSP00000096939"/>
<dbReference type="PeptideAtlas" id="Q9QZC2"/>
<dbReference type="ProteomicsDB" id="289943"/>
<dbReference type="Pumba" id="Q9QZC2"/>
<dbReference type="Antibodypedia" id="30073">
    <property type="antibodies" value="118 antibodies from 22 providers"/>
</dbReference>
<dbReference type="DNASU" id="54712"/>
<dbReference type="Ensembl" id="ENSMUST00000099337.5">
    <property type="protein sequence ID" value="ENSMUSP00000096939.3"/>
    <property type="gene ID" value="ENSMUSG00000074785.6"/>
</dbReference>
<dbReference type="GeneID" id="54712"/>
<dbReference type="KEGG" id="mmu:54712"/>
<dbReference type="UCSC" id="uc007gvz.3">
    <property type="organism name" value="mouse"/>
</dbReference>
<dbReference type="AGR" id="MGI:1890127"/>
<dbReference type="CTD" id="10154"/>
<dbReference type="MGI" id="MGI:1890127">
    <property type="gene designation" value="Plxnc1"/>
</dbReference>
<dbReference type="VEuPathDB" id="HostDB:ENSMUSG00000074785"/>
<dbReference type="eggNOG" id="KOG3610">
    <property type="taxonomic scope" value="Eukaryota"/>
</dbReference>
<dbReference type="GeneTree" id="ENSGT01020000230394"/>
<dbReference type="HOGENOM" id="CLU_004205_0_0_1"/>
<dbReference type="InParanoid" id="Q9QZC2"/>
<dbReference type="OMA" id="ETPIFHR"/>
<dbReference type="OrthoDB" id="384877at2759"/>
<dbReference type="PhylomeDB" id="Q9QZC2"/>
<dbReference type="TreeFam" id="TF312962"/>
<dbReference type="Reactome" id="R-MMU-416700">
    <property type="pathway name" value="Other semaphorin interactions"/>
</dbReference>
<dbReference type="BioGRID-ORCS" id="54712">
    <property type="hits" value="3 hits in 76 CRISPR screens"/>
</dbReference>
<dbReference type="CD-CODE" id="CE726F99">
    <property type="entry name" value="Postsynaptic density"/>
</dbReference>
<dbReference type="ChiTaRS" id="Plxnc1">
    <property type="organism name" value="mouse"/>
</dbReference>
<dbReference type="PRO" id="PR:Q9QZC2"/>
<dbReference type="Proteomes" id="UP000000589">
    <property type="component" value="Chromosome 10"/>
</dbReference>
<dbReference type="RNAct" id="Q9QZC2">
    <property type="molecule type" value="protein"/>
</dbReference>
<dbReference type="Bgee" id="ENSMUSG00000074785">
    <property type="expression patterns" value="Expressed in habenula and 233 other cell types or tissues"/>
</dbReference>
<dbReference type="ExpressionAtlas" id="Q9QZC2">
    <property type="expression patterns" value="baseline and differential"/>
</dbReference>
<dbReference type="GO" id="GO:0150053">
    <property type="term" value="C:cerebellar climbing fiber to Purkinje cell synapse"/>
    <property type="evidence" value="ECO:0000314"/>
    <property type="project" value="SynGO"/>
</dbReference>
<dbReference type="GO" id="GO:0016020">
    <property type="term" value="C:membrane"/>
    <property type="evidence" value="ECO:0007669"/>
    <property type="project" value="UniProtKB-SubCell"/>
</dbReference>
<dbReference type="GO" id="GO:0017154">
    <property type="term" value="F:semaphorin receptor activity"/>
    <property type="evidence" value="ECO:0007669"/>
    <property type="project" value="InterPro"/>
</dbReference>
<dbReference type="GO" id="GO:1905806">
    <property type="term" value="P:regulation of synapse pruning"/>
    <property type="evidence" value="ECO:0000314"/>
    <property type="project" value="SynGO"/>
</dbReference>
<dbReference type="CDD" id="cd00102">
    <property type="entry name" value="IPT"/>
    <property type="match status" value="2"/>
</dbReference>
<dbReference type="CDD" id="cd12789">
    <property type="entry name" value="RasGAP_plexin_C1"/>
    <property type="match status" value="1"/>
</dbReference>
<dbReference type="CDD" id="cd11246">
    <property type="entry name" value="Sema_plexin_C1"/>
    <property type="match status" value="1"/>
</dbReference>
<dbReference type="FunFam" id="1.10.506.10:FF:000033">
    <property type="entry name" value="PLeXin"/>
    <property type="match status" value="1"/>
</dbReference>
<dbReference type="FunFam" id="1.10.506.10:FF:000043">
    <property type="entry name" value="Plexin C1"/>
    <property type="match status" value="1"/>
</dbReference>
<dbReference type="FunFam" id="2.130.10.10:FF:000316">
    <property type="entry name" value="Plexin C1"/>
    <property type="match status" value="1"/>
</dbReference>
<dbReference type="FunFam" id="2.60.40.10:FF:000797">
    <property type="entry name" value="Plexin C1"/>
    <property type="match status" value="1"/>
</dbReference>
<dbReference type="FunFam" id="3.30.1680.10:FF:000020">
    <property type="entry name" value="Plexin C1"/>
    <property type="match status" value="1"/>
</dbReference>
<dbReference type="Gene3D" id="1.10.506.10">
    <property type="entry name" value="GTPase Activation - p120gap, domain 1"/>
    <property type="match status" value="1"/>
</dbReference>
<dbReference type="Gene3D" id="2.60.40.10">
    <property type="entry name" value="Immunoglobulins"/>
    <property type="match status" value="1"/>
</dbReference>
<dbReference type="Gene3D" id="3.30.1680.10">
    <property type="entry name" value="ligand-binding face of the semaphorins, domain 2"/>
    <property type="match status" value="1"/>
</dbReference>
<dbReference type="Gene3D" id="3.10.20.90">
    <property type="entry name" value="Phosphatidylinositol 3-kinase Catalytic Subunit, Chain A, domain 1"/>
    <property type="match status" value="1"/>
</dbReference>
<dbReference type="Gene3D" id="2.130.10.10">
    <property type="entry name" value="YVTN repeat-like/Quinoprotein amine dehydrogenase"/>
    <property type="match status" value="1"/>
</dbReference>
<dbReference type="InterPro" id="IPR013783">
    <property type="entry name" value="Ig-like_fold"/>
</dbReference>
<dbReference type="InterPro" id="IPR002909">
    <property type="entry name" value="IPT_dom"/>
</dbReference>
<dbReference type="InterPro" id="IPR031148">
    <property type="entry name" value="Plexin"/>
</dbReference>
<dbReference type="InterPro" id="IPR041853">
    <property type="entry name" value="Plexin-C1_Sema"/>
</dbReference>
<dbReference type="InterPro" id="IPR013548">
    <property type="entry name" value="Plexin_cytoplasmic_RasGAP_dom"/>
</dbReference>
<dbReference type="InterPro" id="IPR046800">
    <property type="entry name" value="Plexin_RBD"/>
</dbReference>
<dbReference type="InterPro" id="IPR002165">
    <property type="entry name" value="Plexin_repeat"/>
</dbReference>
<dbReference type="InterPro" id="IPR016201">
    <property type="entry name" value="PSI"/>
</dbReference>
<dbReference type="InterPro" id="IPR008936">
    <property type="entry name" value="Rho_GTPase_activation_prot"/>
</dbReference>
<dbReference type="InterPro" id="IPR001627">
    <property type="entry name" value="Semap_dom"/>
</dbReference>
<dbReference type="InterPro" id="IPR036352">
    <property type="entry name" value="Semap_dom_sf"/>
</dbReference>
<dbReference type="InterPro" id="IPR015943">
    <property type="entry name" value="WD40/YVTN_repeat-like_dom_sf"/>
</dbReference>
<dbReference type="PANTHER" id="PTHR22625">
    <property type="entry name" value="PLEXIN"/>
    <property type="match status" value="1"/>
</dbReference>
<dbReference type="PANTHER" id="PTHR22625:SF4">
    <property type="entry name" value="PLEXIN-C1"/>
    <property type="match status" value="1"/>
</dbReference>
<dbReference type="Pfam" id="PF08337">
    <property type="entry name" value="Plexin_cytopl"/>
    <property type="match status" value="1"/>
</dbReference>
<dbReference type="Pfam" id="PF20170">
    <property type="entry name" value="Plexin_RBD"/>
    <property type="match status" value="1"/>
</dbReference>
<dbReference type="Pfam" id="PF01437">
    <property type="entry name" value="PSI"/>
    <property type="match status" value="1"/>
</dbReference>
<dbReference type="Pfam" id="PF01833">
    <property type="entry name" value="TIG"/>
    <property type="match status" value="2"/>
</dbReference>
<dbReference type="SMART" id="SM00429">
    <property type="entry name" value="IPT"/>
    <property type="match status" value="2"/>
</dbReference>
<dbReference type="SMART" id="SM00423">
    <property type="entry name" value="PSI"/>
    <property type="match status" value="2"/>
</dbReference>
<dbReference type="SMART" id="SM00630">
    <property type="entry name" value="Sema"/>
    <property type="match status" value="1"/>
</dbReference>
<dbReference type="SUPFAM" id="SSF48350">
    <property type="entry name" value="GTPase activation domain, GAP"/>
    <property type="match status" value="1"/>
</dbReference>
<dbReference type="SUPFAM" id="SSF103575">
    <property type="entry name" value="Plexin repeat"/>
    <property type="match status" value="1"/>
</dbReference>
<dbReference type="SUPFAM" id="SSF101912">
    <property type="entry name" value="Sema domain"/>
    <property type="match status" value="1"/>
</dbReference>
<dbReference type="PROSITE" id="PS51004">
    <property type="entry name" value="SEMA"/>
    <property type="match status" value="1"/>
</dbReference>
<proteinExistence type="evidence at protein level"/>
<feature type="signal peptide" evidence="2">
    <location>
        <begin position="1"/>
        <end position="34"/>
    </location>
</feature>
<feature type="chain" id="PRO_0000232750" description="Plexin-C1">
    <location>
        <begin position="35"/>
        <end position="1574"/>
    </location>
</feature>
<feature type="topological domain" description="Extracellular" evidence="2">
    <location>
        <begin position="35"/>
        <end position="950"/>
    </location>
</feature>
<feature type="transmembrane region" description="Helical" evidence="2">
    <location>
        <begin position="951"/>
        <end position="971"/>
    </location>
</feature>
<feature type="topological domain" description="Cytoplasmic" evidence="2">
    <location>
        <begin position="972"/>
        <end position="1574"/>
    </location>
</feature>
<feature type="domain" description="Sema" evidence="3">
    <location>
        <begin position="35"/>
        <end position="452"/>
    </location>
</feature>
<feature type="modified residue" description="Phosphoserine" evidence="7">
    <location>
        <position position="984"/>
    </location>
</feature>
<feature type="glycosylation site" description="N-linked (GlcNAc...) asparagine" evidence="2">
    <location>
        <position position="86"/>
    </location>
</feature>
<feature type="glycosylation site" description="N-linked (GlcNAc...) asparagine" evidence="2">
    <location>
        <position position="143"/>
    </location>
</feature>
<feature type="glycosylation site" description="N-linked (GlcNAc...) asparagine" evidence="2">
    <location>
        <position position="149"/>
    </location>
</feature>
<feature type="glycosylation site" description="N-linked (GlcNAc...) asparagine" evidence="2">
    <location>
        <position position="252"/>
    </location>
</feature>
<feature type="glycosylation site" description="N-linked (GlcNAc...) asparagine" evidence="2">
    <location>
        <position position="386"/>
    </location>
</feature>
<feature type="glycosylation site" description="N-linked (GlcNAc...) asparagine" evidence="2">
    <location>
        <position position="407"/>
    </location>
</feature>
<feature type="glycosylation site" description="N-linked (GlcNAc...) asparagine" evidence="2">
    <location>
        <position position="694"/>
    </location>
</feature>
<feature type="glycosylation site" description="N-linked (GlcNAc...) asparagine" evidence="2">
    <location>
        <position position="773"/>
    </location>
</feature>
<feature type="glycosylation site" description="N-linked (GlcNAc...) asparagine" evidence="2">
    <location>
        <position position="802"/>
    </location>
</feature>
<feature type="disulfide bond" evidence="3">
    <location>
        <begin position="64"/>
        <end position="87"/>
    </location>
</feature>
<feature type="disulfide bond" evidence="3">
    <location>
        <begin position="156"/>
        <end position="194"/>
    </location>
</feature>
<feature type="disulfide bond" evidence="3">
    <location>
        <begin position="283"/>
        <end position="329"/>
    </location>
</feature>
<feature type="disulfide bond" evidence="3">
    <location>
        <begin position="455"/>
        <end position="472"/>
    </location>
</feature>
<feature type="disulfide bond" evidence="3">
    <location>
        <begin position="461"/>
        <end position="506"/>
    </location>
</feature>
<feature type="disulfide bond" evidence="3">
    <location>
        <begin position="464"/>
        <end position="481"/>
    </location>
</feature>
<feature type="disulfide bond" evidence="3">
    <location>
        <begin position="475"/>
        <end position="487"/>
    </location>
</feature>
<accession>Q9QZC2</accession>
<accession>Q8CGW1</accession>